<dbReference type="EMBL" id="AF237906">
    <property type="protein sequence ID" value="AAK37415.1"/>
    <property type="molecule type" value="mRNA"/>
</dbReference>
<dbReference type="EMBL" id="AY039038">
    <property type="protein sequence ID" value="AAK92698.1"/>
    <property type="molecule type" value="mRNA"/>
</dbReference>
<dbReference type="EMBL" id="AB026044">
    <property type="protein sequence ID" value="BAB18756.1"/>
    <property type="molecule type" value="mRNA"/>
</dbReference>
<dbReference type="EMBL" id="AC148321">
    <property type="status" value="NOT_ANNOTATED_CDS"/>
    <property type="molecule type" value="Genomic_DNA"/>
</dbReference>
<dbReference type="EMBL" id="AK172700">
    <property type="protein sequence ID" value="BAE43134.1"/>
    <property type="status" value="ALT_SEQ"/>
    <property type="molecule type" value="mRNA"/>
</dbReference>
<dbReference type="EMBL" id="BC042719">
    <property type="protein sequence ID" value="AAH42719.1"/>
    <property type="molecule type" value="mRNA"/>
</dbReference>
<dbReference type="CCDS" id="CCDS37921.1">
    <molecule id="Q99N10-3"/>
</dbReference>
<dbReference type="RefSeq" id="NP_071875.2">
    <molecule id="Q99N10-3"/>
    <property type="nucleotide sequence ID" value="NM_022430.2"/>
</dbReference>
<dbReference type="SMR" id="Q99N10"/>
<dbReference type="FunCoup" id="Q99N10">
    <property type="interactions" value="720"/>
</dbReference>
<dbReference type="STRING" id="10090.ENSMUSP00000025636"/>
<dbReference type="PhosphoSitePlus" id="Q99N10"/>
<dbReference type="PaxDb" id="10090-ENSMUSP00000025636"/>
<dbReference type="Antibodypedia" id="1542">
    <property type="antibodies" value="137 antibodies from 18 providers"/>
</dbReference>
<dbReference type="DNASU" id="64381"/>
<dbReference type="Ensembl" id="ENSMUST00000025636.8">
    <molecule id="Q99N10-3"/>
    <property type="protein sequence ID" value="ENSMUSP00000025636.7"/>
    <property type="gene ID" value="ENSMUSG00000024730.8"/>
</dbReference>
<dbReference type="GeneID" id="64381"/>
<dbReference type="KEGG" id="mmu:64381"/>
<dbReference type="UCSC" id="uc008gro.1">
    <molecule id="Q99N10-3"/>
    <property type="organism name" value="mouse"/>
</dbReference>
<dbReference type="AGR" id="MGI:1927657"/>
<dbReference type="CTD" id="64381"/>
<dbReference type="MGI" id="MGI:1927657">
    <property type="gene designation" value="Ms4a8a"/>
</dbReference>
<dbReference type="VEuPathDB" id="HostDB:ENSMUSG00000024730"/>
<dbReference type="eggNOG" id="ENOG502SR7E">
    <property type="taxonomic scope" value="Eukaryota"/>
</dbReference>
<dbReference type="GeneTree" id="ENSGT00940000162329"/>
<dbReference type="HOGENOM" id="CLU_091032_1_0_1"/>
<dbReference type="InParanoid" id="Q99N10"/>
<dbReference type="OMA" id="QLVCCQH"/>
<dbReference type="OrthoDB" id="10071849at2759"/>
<dbReference type="PhylomeDB" id="Q99N10"/>
<dbReference type="TreeFam" id="TF335157"/>
<dbReference type="BioGRID-ORCS" id="64381">
    <property type="hits" value="3 hits in 79 CRISPR screens"/>
</dbReference>
<dbReference type="ChiTaRS" id="Ms4a8a">
    <property type="organism name" value="mouse"/>
</dbReference>
<dbReference type="PRO" id="PR:Q99N10"/>
<dbReference type="Proteomes" id="UP000000589">
    <property type="component" value="Chromosome 19"/>
</dbReference>
<dbReference type="RNAct" id="Q99N10">
    <property type="molecule type" value="protein"/>
</dbReference>
<dbReference type="Bgee" id="ENSMUSG00000024730">
    <property type="expression patterns" value="Expressed in left colon and 57 other cell types or tissues"/>
</dbReference>
<dbReference type="GO" id="GO:0005886">
    <property type="term" value="C:plasma membrane"/>
    <property type="evidence" value="ECO:0007669"/>
    <property type="project" value="Ensembl"/>
</dbReference>
<dbReference type="InterPro" id="IPR007237">
    <property type="entry name" value="CD20-like"/>
</dbReference>
<dbReference type="InterPro" id="IPR030417">
    <property type="entry name" value="MS4A"/>
</dbReference>
<dbReference type="PANTHER" id="PTHR23320:SF155">
    <property type="entry name" value="MEMBRANE-SPANNING 4-DOMAINS SUBFAMILY A MEMBER 8"/>
    <property type="match status" value="1"/>
</dbReference>
<dbReference type="PANTHER" id="PTHR23320">
    <property type="entry name" value="MEMBRANE-SPANNING 4-DOMAINS SUBFAMILY A MS4A -RELATED"/>
    <property type="match status" value="1"/>
</dbReference>
<dbReference type="Pfam" id="PF04103">
    <property type="entry name" value="CD20"/>
    <property type="match status" value="1"/>
</dbReference>
<sequence>MNRPTAQGAVNLSGSKFSTAKSWEPEQERLTWQPGTVSMNTVTSPGPMANSVYVVAPPNSYPVVPGTVPQMPIYPSNQPQVHVISGHLPGLVPAMTEPPAQRVLKKGQVLGAIQILIGLVHIGLGSIMITNLFSHYTPVSLYGGFPFWGGIWFIISGSLSVAAETQPNSPCLLNGSVGLNIFSAICSAVGIMLFITDISISSGYIYPSYYPYQENLGVRTGVAISSVLLIFCLLELSIASVSSHFGCQVACCHYNNPGVVIPNVYAANPVVIPEPPNPIPSYSEVVQDSR</sequence>
<comment type="function">
    <text>May be involved in signal transduction as a component of a multimeric receptor complex.</text>
</comment>
<comment type="subcellular location">
    <subcellularLocation>
        <location>Membrane</location>
        <topology>Multi-pass membrane protein</topology>
    </subcellularLocation>
</comment>
<comment type="alternative products">
    <event type="alternative splicing"/>
    <isoform>
        <id>Q99N10-3</id>
        <name>1</name>
        <sequence type="displayed"/>
    </isoform>
    <isoform>
        <id>Q99N10-1</id>
        <name>2</name>
        <sequence type="described" ref="VSP_053843"/>
    </isoform>
</comment>
<comment type="tissue specificity">
    <text evidence="3">Expressed strongly in intestine and colon and minimally in lung and ovary.</text>
</comment>
<comment type="miscellaneous">
    <molecule>Isoform 2</molecule>
    <text evidence="6">Not found in strain C57BL/6J but has been identified in strains DBA/2J and FVB/N.</text>
</comment>
<comment type="similarity">
    <text evidence="6">Belongs to the MS4A family.</text>
</comment>
<comment type="sequence caution" evidence="6">
    <conflict type="miscellaneous discrepancy">
        <sequence resource="EMBL-CDS" id="BAE43134"/>
    </conflict>
    <text>Probable cloning artifact.</text>
</comment>
<keyword id="KW-0025">Alternative splicing</keyword>
<keyword id="KW-0472">Membrane</keyword>
<keyword id="KW-0675">Receptor</keyword>
<keyword id="KW-1185">Reference proteome</keyword>
<keyword id="KW-0812">Transmembrane</keyword>
<keyword id="KW-1133">Transmembrane helix</keyword>
<accession>Q99N10</accession>
<accession>F8WIR2</accession>
<accession>Q2TVW6</accession>
<accession>Q3T990</accession>
<accession>Q8CG94</accession>
<accession>Q9EQZ0</accession>
<feature type="chain" id="PRO_0000158644" description="Membrane-spanning 4-domains subfamily A member 8">
    <location>
        <begin position="1"/>
        <end position="290"/>
    </location>
</feature>
<feature type="topological domain" description="Cytoplasmic" evidence="1">
    <location>
        <begin position="1"/>
        <end position="108"/>
    </location>
</feature>
<feature type="transmembrane region" description="Helical" evidence="1">
    <location>
        <begin position="109"/>
        <end position="129"/>
    </location>
</feature>
<feature type="topological domain" description="Extracellular" evidence="1">
    <location>
        <begin position="130"/>
        <end position="138"/>
    </location>
</feature>
<feature type="transmembrane region" description="Helical" evidence="1">
    <location>
        <begin position="139"/>
        <end position="159"/>
    </location>
</feature>
<feature type="topological domain" description="Cytoplasmic" evidence="1">
    <location>
        <begin position="160"/>
        <end position="174"/>
    </location>
</feature>
<feature type="transmembrane region" description="Helical" evidence="1">
    <location>
        <begin position="175"/>
        <end position="195"/>
    </location>
</feature>
<feature type="topological domain" description="Extracellular" evidence="1">
    <location>
        <begin position="196"/>
        <end position="220"/>
    </location>
</feature>
<feature type="transmembrane region" description="Helical" evidence="1">
    <location>
        <begin position="221"/>
        <end position="241"/>
    </location>
</feature>
<feature type="topological domain" description="Cytoplasmic" evidence="1">
    <location>
        <begin position="242"/>
        <end position="290"/>
    </location>
</feature>
<feature type="region of interest" description="Disordered" evidence="2">
    <location>
        <begin position="1"/>
        <end position="25"/>
    </location>
</feature>
<feature type="compositionally biased region" description="Polar residues" evidence="2">
    <location>
        <begin position="1"/>
        <end position="21"/>
    </location>
</feature>
<feature type="splice variant" id="VSP_053843" description="In isoform 2." evidence="4 5">
    <original>MNRPTAQGAVNLSGSKFSTAKSW</original>
    <variation>M</variation>
    <location>
        <begin position="1"/>
        <end position="23"/>
    </location>
</feature>
<feature type="sequence conflict" description="In Ref. 2; AAK92698." evidence="6" ref="2">
    <original>W</original>
    <variation>R</variation>
    <location>
        <position position="32"/>
    </location>
</feature>
<feature type="sequence conflict" description="In Ref. 2; AAK92698." evidence="6" ref="2">
    <original>V</original>
    <variation>G</variation>
    <location>
        <position position="63"/>
    </location>
</feature>
<feature type="sequence conflict" description="In Ref. 2; AAK92698." evidence="6" ref="2">
    <original>S</original>
    <variation>Y</variation>
    <location>
        <position position="140"/>
    </location>
</feature>
<feature type="sequence conflict" description="In Ref. 2; AAK92698." evidence="6" ref="2">
    <original>F</original>
    <variation>V</variation>
    <location>
        <position position="153"/>
    </location>
</feature>
<feature type="sequence conflict" description="In Ref. 2; AAK92698." evidence="6" ref="2">
    <original>A</original>
    <variation>G</variation>
    <location>
        <position position="163"/>
    </location>
</feature>
<protein>
    <recommendedName>
        <fullName>Membrane-spanning 4-domains subfamily A member 8</fullName>
    </recommendedName>
    <alternativeName>
        <fullName>CD20 antigen-like 5</fullName>
    </alternativeName>
    <alternativeName>
        <fullName>Membrane-spanning 4-domains subfamily A member 8A</fullName>
    </alternativeName>
</protein>
<proteinExistence type="evidence at transcript level"/>
<evidence type="ECO:0000255" key="1"/>
<evidence type="ECO:0000256" key="2">
    <source>
        <dbReference type="SAM" id="MobiDB-lite"/>
    </source>
</evidence>
<evidence type="ECO:0000269" key="3">
    <source>
    </source>
</evidence>
<evidence type="ECO:0000303" key="4">
    <source>
    </source>
</evidence>
<evidence type="ECO:0000303" key="5">
    <source>
    </source>
</evidence>
<evidence type="ECO:0000305" key="6"/>
<gene>
    <name type="primary">Ms4a8</name>
    <name type="synonym">Cd20l5</name>
    <name type="synonym">Ms4a8a</name>
</gene>
<name>M4A8_MOUSE</name>
<organism>
    <name type="scientific">Mus musculus</name>
    <name type="common">Mouse</name>
    <dbReference type="NCBI Taxonomy" id="10090"/>
    <lineage>
        <taxon>Eukaryota</taxon>
        <taxon>Metazoa</taxon>
        <taxon>Chordata</taxon>
        <taxon>Craniata</taxon>
        <taxon>Vertebrata</taxon>
        <taxon>Euteleostomi</taxon>
        <taxon>Mammalia</taxon>
        <taxon>Eutheria</taxon>
        <taxon>Euarchontoglires</taxon>
        <taxon>Glires</taxon>
        <taxon>Rodentia</taxon>
        <taxon>Myomorpha</taxon>
        <taxon>Muroidea</taxon>
        <taxon>Muridae</taxon>
        <taxon>Murinae</taxon>
        <taxon>Mus</taxon>
        <taxon>Mus</taxon>
    </lineage>
</organism>
<reference key="1">
    <citation type="journal article" date="2001" name="Genomics">
        <title>Identification of a CD20-, Fc-epsilon-RI-beta-, and HTm4-related gene family: sixteen new MS4A family members expressed in human and mouse.</title>
        <authorList>
            <person name="Liang Y."/>
            <person name="Tedder T.F."/>
        </authorList>
    </citation>
    <scope>NUCLEOTIDE SEQUENCE [MRNA] (ISOFORM 2)</scope>
    <source>
        <strain>DBA/2J</strain>
        <strain>FVB/N</strain>
        <tissue>Colon</tissue>
    </source>
</reference>
<reference key="2">
    <citation type="journal article" date="2001" name="Gene">
        <title>Identification of a new multigene four-transmembrane family (MS4A) related to CD20, HTm4 and beta subunit of the high-affinity IgE receptor.</title>
        <authorList>
            <person name="Ishibashi K."/>
            <person name="Suzuki M."/>
            <person name="Sasaki S."/>
            <person name="Imai M."/>
        </authorList>
    </citation>
    <scope>NUCLEOTIDE SEQUENCE [MRNA] (ISOFORM 2)</scope>
    <scope>TISSUE SPECIFICITY</scope>
    <source>
        <strain>FVB/N</strain>
        <tissue>Colon</tissue>
    </source>
</reference>
<reference key="3">
    <citation type="journal article" date="2009" name="PLoS Biol.">
        <title>Lineage-specific biology revealed by a finished genome assembly of the mouse.</title>
        <authorList>
            <person name="Church D.M."/>
            <person name="Goodstadt L."/>
            <person name="Hillier L.W."/>
            <person name="Zody M.C."/>
            <person name="Goldstein S."/>
            <person name="She X."/>
            <person name="Bult C.J."/>
            <person name="Agarwala R."/>
            <person name="Cherry J.L."/>
            <person name="DiCuccio M."/>
            <person name="Hlavina W."/>
            <person name="Kapustin Y."/>
            <person name="Meric P."/>
            <person name="Maglott D."/>
            <person name="Birtle Z."/>
            <person name="Marques A.C."/>
            <person name="Graves T."/>
            <person name="Zhou S."/>
            <person name="Teague B."/>
            <person name="Potamousis K."/>
            <person name="Churas C."/>
            <person name="Place M."/>
            <person name="Herschleb J."/>
            <person name="Runnheim R."/>
            <person name="Forrest D."/>
            <person name="Amos-Landgraf J."/>
            <person name="Schwartz D.C."/>
            <person name="Cheng Z."/>
            <person name="Lindblad-Toh K."/>
            <person name="Eichler E.E."/>
            <person name="Ponting C.P."/>
        </authorList>
    </citation>
    <scope>NUCLEOTIDE SEQUENCE [LARGE SCALE GENOMIC DNA]</scope>
    <source>
        <strain>C57BL/6J</strain>
    </source>
</reference>
<reference key="4">
    <citation type="journal article" date="2005" name="Science">
        <title>The transcriptional landscape of the mammalian genome.</title>
        <authorList>
            <person name="Carninci P."/>
            <person name="Kasukawa T."/>
            <person name="Katayama S."/>
            <person name="Gough J."/>
            <person name="Frith M.C."/>
            <person name="Maeda N."/>
            <person name="Oyama R."/>
            <person name="Ravasi T."/>
            <person name="Lenhard B."/>
            <person name="Wells C."/>
            <person name="Kodzius R."/>
            <person name="Shimokawa K."/>
            <person name="Bajic V.B."/>
            <person name="Brenner S.E."/>
            <person name="Batalov S."/>
            <person name="Forrest A.R."/>
            <person name="Zavolan M."/>
            <person name="Davis M.J."/>
            <person name="Wilming L.G."/>
            <person name="Aidinis V."/>
            <person name="Allen J.E."/>
            <person name="Ambesi-Impiombato A."/>
            <person name="Apweiler R."/>
            <person name="Aturaliya R.N."/>
            <person name="Bailey T.L."/>
            <person name="Bansal M."/>
            <person name="Baxter L."/>
            <person name="Beisel K.W."/>
            <person name="Bersano T."/>
            <person name="Bono H."/>
            <person name="Chalk A.M."/>
            <person name="Chiu K.P."/>
            <person name="Choudhary V."/>
            <person name="Christoffels A."/>
            <person name="Clutterbuck D.R."/>
            <person name="Crowe M.L."/>
            <person name="Dalla E."/>
            <person name="Dalrymple B.P."/>
            <person name="de Bono B."/>
            <person name="Della Gatta G."/>
            <person name="di Bernardo D."/>
            <person name="Down T."/>
            <person name="Engstrom P."/>
            <person name="Fagiolini M."/>
            <person name="Faulkner G."/>
            <person name="Fletcher C.F."/>
            <person name="Fukushima T."/>
            <person name="Furuno M."/>
            <person name="Futaki S."/>
            <person name="Gariboldi M."/>
            <person name="Georgii-Hemming P."/>
            <person name="Gingeras T.R."/>
            <person name="Gojobori T."/>
            <person name="Green R.E."/>
            <person name="Gustincich S."/>
            <person name="Harbers M."/>
            <person name="Hayashi Y."/>
            <person name="Hensch T.K."/>
            <person name="Hirokawa N."/>
            <person name="Hill D."/>
            <person name="Huminiecki L."/>
            <person name="Iacono M."/>
            <person name="Ikeo K."/>
            <person name="Iwama A."/>
            <person name="Ishikawa T."/>
            <person name="Jakt M."/>
            <person name="Kanapin A."/>
            <person name="Katoh M."/>
            <person name="Kawasawa Y."/>
            <person name="Kelso J."/>
            <person name="Kitamura H."/>
            <person name="Kitano H."/>
            <person name="Kollias G."/>
            <person name="Krishnan S.P."/>
            <person name="Kruger A."/>
            <person name="Kummerfeld S.K."/>
            <person name="Kurochkin I.V."/>
            <person name="Lareau L.F."/>
            <person name="Lazarevic D."/>
            <person name="Lipovich L."/>
            <person name="Liu J."/>
            <person name="Liuni S."/>
            <person name="McWilliam S."/>
            <person name="Madan Babu M."/>
            <person name="Madera M."/>
            <person name="Marchionni L."/>
            <person name="Matsuda H."/>
            <person name="Matsuzawa S."/>
            <person name="Miki H."/>
            <person name="Mignone F."/>
            <person name="Miyake S."/>
            <person name="Morris K."/>
            <person name="Mottagui-Tabar S."/>
            <person name="Mulder N."/>
            <person name="Nakano N."/>
            <person name="Nakauchi H."/>
            <person name="Ng P."/>
            <person name="Nilsson R."/>
            <person name="Nishiguchi S."/>
            <person name="Nishikawa S."/>
            <person name="Nori F."/>
            <person name="Ohara O."/>
            <person name="Okazaki Y."/>
            <person name="Orlando V."/>
            <person name="Pang K.C."/>
            <person name="Pavan W.J."/>
            <person name="Pavesi G."/>
            <person name="Pesole G."/>
            <person name="Petrovsky N."/>
            <person name="Piazza S."/>
            <person name="Reed J."/>
            <person name="Reid J.F."/>
            <person name="Ring B.Z."/>
            <person name="Ringwald M."/>
            <person name="Rost B."/>
            <person name="Ruan Y."/>
            <person name="Salzberg S.L."/>
            <person name="Sandelin A."/>
            <person name="Schneider C."/>
            <person name="Schoenbach C."/>
            <person name="Sekiguchi K."/>
            <person name="Semple C.A."/>
            <person name="Seno S."/>
            <person name="Sessa L."/>
            <person name="Sheng Y."/>
            <person name="Shibata Y."/>
            <person name="Shimada H."/>
            <person name="Shimada K."/>
            <person name="Silva D."/>
            <person name="Sinclair B."/>
            <person name="Sperling S."/>
            <person name="Stupka E."/>
            <person name="Sugiura K."/>
            <person name="Sultana R."/>
            <person name="Takenaka Y."/>
            <person name="Taki K."/>
            <person name="Tammoja K."/>
            <person name="Tan S.L."/>
            <person name="Tang S."/>
            <person name="Taylor M.S."/>
            <person name="Tegner J."/>
            <person name="Teichmann S.A."/>
            <person name="Ueda H.R."/>
            <person name="van Nimwegen E."/>
            <person name="Verardo R."/>
            <person name="Wei C.L."/>
            <person name="Yagi K."/>
            <person name="Yamanishi H."/>
            <person name="Zabarovsky E."/>
            <person name="Zhu S."/>
            <person name="Zimmer A."/>
            <person name="Hide W."/>
            <person name="Bult C."/>
            <person name="Grimmond S.M."/>
            <person name="Teasdale R.D."/>
            <person name="Liu E.T."/>
            <person name="Brusic V."/>
            <person name="Quackenbush J."/>
            <person name="Wahlestedt C."/>
            <person name="Mattick J.S."/>
            <person name="Hume D.A."/>
            <person name="Kai C."/>
            <person name="Sasaki D."/>
            <person name="Tomaru Y."/>
            <person name="Fukuda S."/>
            <person name="Kanamori-Katayama M."/>
            <person name="Suzuki M."/>
            <person name="Aoki J."/>
            <person name="Arakawa T."/>
            <person name="Iida J."/>
            <person name="Imamura K."/>
            <person name="Itoh M."/>
            <person name="Kato T."/>
            <person name="Kawaji H."/>
            <person name="Kawagashira N."/>
            <person name="Kawashima T."/>
            <person name="Kojima M."/>
            <person name="Kondo S."/>
            <person name="Konno H."/>
            <person name="Nakano K."/>
            <person name="Ninomiya N."/>
            <person name="Nishio T."/>
            <person name="Okada M."/>
            <person name="Plessy C."/>
            <person name="Shibata K."/>
            <person name="Shiraki T."/>
            <person name="Suzuki S."/>
            <person name="Tagami M."/>
            <person name="Waki K."/>
            <person name="Watahiki A."/>
            <person name="Okamura-Oho Y."/>
            <person name="Suzuki H."/>
            <person name="Kawai J."/>
            <person name="Hayashizaki Y."/>
        </authorList>
    </citation>
    <scope>NUCLEOTIDE SEQUENCE [LARGE SCALE MRNA] OF 1-152 (ISOFORM 1)</scope>
    <source>
        <strain>NOD</strain>
        <tissue>Spleen</tissue>
    </source>
</reference>
<reference key="5">
    <citation type="journal article" date="2004" name="Genome Res.">
        <title>The status, quality, and expansion of the NIH full-length cDNA project: the Mammalian Gene Collection (MGC).</title>
        <authorList>
            <consortium name="The MGC Project Team"/>
        </authorList>
    </citation>
    <scope>NUCLEOTIDE SEQUENCE [LARGE SCALE MRNA] OF 3-290 (ISOFORM 1)</scope>
    <source>
        <strain>FVB/N</strain>
        <tissue>Colon</tissue>
    </source>
</reference>